<reference key="1">
    <citation type="journal article" date="2002" name="Nature">
        <title>Complete genome sequence of the model actinomycete Streptomyces coelicolor A3(2).</title>
        <authorList>
            <person name="Bentley S.D."/>
            <person name="Chater K.F."/>
            <person name="Cerdeno-Tarraga A.-M."/>
            <person name="Challis G.L."/>
            <person name="Thomson N.R."/>
            <person name="James K.D."/>
            <person name="Harris D.E."/>
            <person name="Quail M.A."/>
            <person name="Kieser H."/>
            <person name="Harper D."/>
            <person name="Bateman A."/>
            <person name="Brown S."/>
            <person name="Chandra G."/>
            <person name="Chen C.W."/>
            <person name="Collins M."/>
            <person name="Cronin A."/>
            <person name="Fraser A."/>
            <person name="Goble A."/>
            <person name="Hidalgo J."/>
            <person name="Hornsby T."/>
            <person name="Howarth S."/>
            <person name="Huang C.-H."/>
            <person name="Kieser T."/>
            <person name="Larke L."/>
            <person name="Murphy L.D."/>
            <person name="Oliver K."/>
            <person name="O'Neil S."/>
            <person name="Rabbinowitsch E."/>
            <person name="Rajandream M.A."/>
            <person name="Rutherford K.M."/>
            <person name="Rutter S."/>
            <person name="Seeger K."/>
            <person name="Saunders D."/>
            <person name="Sharp S."/>
            <person name="Squares R."/>
            <person name="Squares S."/>
            <person name="Taylor K."/>
            <person name="Warren T."/>
            <person name="Wietzorrek A."/>
            <person name="Woodward J.R."/>
            <person name="Barrell B.G."/>
            <person name="Parkhill J."/>
            <person name="Hopwood D.A."/>
        </authorList>
    </citation>
    <scope>NUCLEOTIDE SEQUENCE [LARGE SCALE GENOMIC DNA]</scope>
    <source>
        <strain>ATCC BAA-471 / A3(2) / M145</strain>
    </source>
</reference>
<reference key="2">
    <citation type="journal article" date="2003" name="Proc. Natl. Acad. Sci. U.S.A.">
        <title>Expression and mechanistic analysis of a germacradienol synthase from Streptomyces coelicolor implicated in geosmin biosynthesis.</title>
        <authorList>
            <person name="Cane D.E."/>
            <person name="Watt R.M."/>
        </authorList>
    </citation>
    <scope>PROTEIN SEQUENCE OF 2-10</scope>
    <scope>FUNCTION</scope>
    <scope>CATALYTIC ACTIVITY</scope>
    <scope>DOMAIN</scope>
    <scope>KINETIC PARAMETERS</scope>
    <scope>COFACTOR</scope>
    <source>
        <strain>ATCC BAA-471 / A3(2) / M145</strain>
    </source>
</reference>
<reference key="3">
    <citation type="journal article" date="2003" name="Proc. Natl. Acad. Sci. U.S.A.">
        <title>PCR-targeted Streptomyces gene replacement identifies a protein domain needed for biosynthesis of the sesquiterpene soil odor geosmin.</title>
        <authorList>
            <person name="Gust B."/>
            <person name="Challis G.L."/>
            <person name="Fowler K."/>
            <person name="Kieser T."/>
            <person name="Chater K.F."/>
        </authorList>
    </citation>
    <scope>DOMAIN</scope>
    <scope>ROLE IN GEOSMIN BIOSYNTHESIS</scope>
    <source>
        <strain>ATCC BAA-471 / A3(2) / M145</strain>
    </source>
</reference>
<reference key="4">
    <citation type="journal article" date="2004" name="J. Am. Chem. Soc.">
        <title>Mechanism and stereochemistry of the germacradienol/germacrene D synthase of Streptomyces coelicolor A3(2).</title>
        <authorList>
            <person name="He X."/>
            <person name="Cane D.E."/>
        </authorList>
    </citation>
    <scope>FUNCTION IN GERMACRENE D PRODUCTION</scope>
    <scope>REACTION STEREOCHEMISTRY</scope>
    <source>
        <strain>ATCC BAA-471 / A3(2) / M145</strain>
    </source>
</reference>
<reference key="5">
    <citation type="journal article" date="2006" name="J. Am. Chem. Soc.">
        <title>Geosmin biosynthesis. Streptomyces coelicolor germacradienol/germacrene D synthase converts farnesyl diphosphate to geosmin.</title>
        <authorList>
            <person name="Jiang J."/>
            <person name="He X."/>
            <person name="Cane D.E."/>
        </authorList>
    </citation>
    <scope>FUNCTION IN DIRECT GEOSMIN PRODUCTION</scope>
    <scope>COFACTOR</scope>
    <scope>REACTION MECHANISM</scope>
    <source>
        <strain>ATCC BAA-471 / A3(2) / M145</strain>
    </source>
</reference>
<gene>
    <name type="primary">cyc2</name>
    <name type="ordered locus">SCO6073</name>
    <name type="ORF">SC9B1.20</name>
</gene>
<organism>
    <name type="scientific">Streptomyces coelicolor (strain ATCC BAA-471 / A3(2) / M145)</name>
    <dbReference type="NCBI Taxonomy" id="100226"/>
    <lineage>
        <taxon>Bacteria</taxon>
        <taxon>Bacillati</taxon>
        <taxon>Actinomycetota</taxon>
        <taxon>Actinomycetes</taxon>
        <taxon>Kitasatosporales</taxon>
        <taxon>Streptomycetaceae</taxon>
        <taxon>Streptomyces</taxon>
        <taxon>Streptomyces albidoflavus group</taxon>
    </lineage>
</organism>
<name>CYC2_STRCO</name>
<comment type="function">
    <text evidence="2 3 4 5">Tow-domain protein where the N-terminal domain catalyzes the cyclization of farnesyl diphosphate (FPP) to a 85:15 mixture of the sesquiterpene alcohol germacradienol and the sesquiterpene hydrocarbon germacrene D. The C-terminal domain partially converts the germacradienol formed into geosmin, the characteristic odoriferous ('earthy aroma') constituent of Streptomyces species.</text>
</comment>
<comment type="catalytic activity">
    <reaction evidence="2">
        <text>(2E,6E)-farnesyl diphosphate + H2O = (1E,4S,5E,7R)-germacra-1(10),5-dien-11-ol + diphosphate</text>
        <dbReference type="Rhea" id="RHEA:22436"/>
        <dbReference type="ChEBI" id="CHEBI:15377"/>
        <dbReference type="ChEBI" id="CHEBI:33019"/>
        <dbReference type="ChEBI" id="CHEBI:46734"/>
        <dbReference type="ChEBI" id="CHEBI:175763"/>
        <dbReference type="EC" id="4.2.3.22"/>
    </reaction>
</comment>
<comment type="catalytic activity">
    <reaction evidence="2">
        <text>(1E,4S,5E,7R)-germacra-1(10),5-dien-11-ol + H2O = (-)-geosmin + acetone</text>
        <dbReference type="Rhea" id="RHEA:30371"/>
        <dbReference type="ChEBI" id="CHEBI:15347"/>
        <dbReference type="ChEBI" id="CHEBI:15377"/>
        <dbReference type="ChEBI" id="CHEBI:46702"/>
        <dbReference type="ChEBI" id="CHEBI:46734"/>
        <dbReference type="EC" id="4.1.99.16"/>
    </reaction>
</comment>
<comment type="catalytic activity">
    <reaction evidence="2">
        <text>(2E,6E)-farnesyl diphosphate = (-)-germacrene D + diphosphate</text>
        <dbReference type="Rhea" id="RHEA:12016"/>
        <dbReference type="ChEBI" id="CHEBI:33019"/>
        <dbReference type="ChEBI" id="CHEBI:49044"/>
        <dbReference type="ChEBI" id="CHEBI:175763"/>
        <dbReference type="EC" id="4.2.3.75"/>
    </reaction>
</comment>
<comment type="cofactor">
    <cofactor evidence="2 5">
        <name>Mg(2+)</name>
        <dbReference type="ChEBI" id="CHEBI:18420"/>
    </cofactor>
    <text evidence="2 5">Magnesium. Fe(2+) or Cu(2+) ions are very less efficient as cofactors.</text>
</comment>
<comment type="biophysicochemical properties">
    <kinetics>
        <KM evidence="2">62 nM for FPP</KM>
    </kinetics>
</comment>
<comment type="pathway">
    <text>Secondary metabolite biosynthesis; geosmin biosynthesis.</text>
</comment>
<comment type="pathway">
    <text>Sesquiterpene biosynthesis; germacradienol biosynthesis; germacradienol from farnesyl diphosphate: step 1/1.</text>
</comment>
<comment type="pathway">
    <text>Sesquiterpene biosynthesis; germacrene D biosynthesis; germacrene D from farnesyl diphosphate: step 1/1.</text>
</comment>
<comment type="domain">
    <text evidence="2 3">Consists of 2 homologous sesquiterpene synthase domains. The Asp-Asp-Xaa-Xaa-Asp/Glu (DDXXD/E) motif is important for the catalytic activity, presumably through binding to Mg(2+).</text>
</comment>
<comment type="miscellaneous">
    <text>The earthy odorant geosmin is also responsible for the 'off-flavor' of contaminated drinking water, wines, and other foodstuffs.</text>
</comment>
<comment type="similarity">
    <text evidence="6">Belongs to the terpene synthase family.</text>
</comment>
<comment type="caution">
    <text evidence="6">It is uncertain whether the initial Met is cleaved or not.</text>
</comment>
<comment type="online information" name="Protein Spotlight">
    <link uri="https://www.proteinspotlight.org/back_issues/035"/>
    <text>The earth's perfume - Issue 35 of June 2003</text>
</comment>
<dbReference type="EC" id="4.2.3.22"/>
<dbReference type="EC" id="4.2.3.75"/>
<dbReference type="EC" id="4.1.99.16"/>
<dbReference type="EMBL" id="AL939126">
    <property type="protein sequence ID" value="CAB41566.1"/>
    <property type="molecule type" value="Genomic_DNA"/>
</dbReference>
<dbReference type="PIR" id="T35865">
    <property type="entry name" value="T35865"/>
</dbReference>
<dbReference type="RefSeq" id="NP_630182.1">
    <property type="nucleotide sequence ID" value="NC_003888.3"/>
</dbReference>
<dbReference type="RefSeq" id="WP_011030632.1">
    <property type="nucleotide sequence ID" value="NZ_VNID01000009.1"/>
</dbReference>
<dbReference type="PDB" id="5DW7">
    <property type="method" value="X-ray"/>
    <property type="resolution" value="3.20 A"/>
    <property type="chains" value="A=1-366"/>
</dbReference>
<dbReference type="PDB" id="5DZ2">
    <property type="method" value="X-ray"/>
    <property type="resolution" value="2.11 A"/>
    <property type="chains" value="A/B=1-338"/>
</dbReference>
<dbReference type="PDBsum" id="5DW7"/>
<dbReference type="PDBsum" id="5DZ2"/>
<dbReference type="SMR" id="Q9X839"/>
<dbReference type="STRING" id="100226.gene:17763732"/>
<dbReference type="PaxDb" id="100226-SCO6073"/>
<dbReference type="KEGG" id="sco:SCO6073"/>
<dbReference type="PATRIC" id="fig|100226.15.peg.6175"/>
<dbReference type="eggNOG" id="ENOG502Z881">
    <property type="taxonomic scope" value="Bacteria"/>
</dbReference>
<dbReference type="HOGENOM" id="CLU_372108_0_0_11"/>
<dbReference type="InParanoid" id="Q9X839"/>
<dbReference type="OrthoDB" id="2989600at2"/>
<dbReference type="BioCyc" id="MetaCyc:MONOMER-14022"/>
<dbReference type="BRENDA" id="4.1.99.16">
    <property type="organism ID" value="5998"/>
</dbReference>
<dbReference type="BRENDA" id="4.2.3.22">
    <property type="organism ID" value="5998"/>
</dbReference>
<dbReference type="SABIO-RK" id="Q9X839"/>
<dbReference type="UniPathway" id="UPA00209"/>
<dbReference type="UniPathway" id="UPA00283">
    <property type="reaction ID" value="UER00583"/>
</dbReference>
<dbReference type="UniPathway" id="UPA00285">
    <property type="reaction ID" value="UER00584"/>
</dbReference>
<dbReference type="Proteomes" id="UP000001973">
    <property type="component" value="Chromosome"/>
</dbReference>
<dbReference type="GO" id="GO:0034004">
    <property type="term" value="F:germacradienol synthase activity"/>
    <property type="evidence" value="ECO:0007669"/>
    <property type="project" value="UniProtKB-EC"/>
</dbReference>
<dbReference type="GO" id="GO:0052577">
    <property type="term" value="F:germacrene-D synthase activity"/>
    <property type="evidence" value="ECO:0007669"/>
    <property type="project" value="UniProtKB-EC"/>
</dbReference>
<dbReference type="GO" id="GO:0046872">
    <property type="term" value="F:metal ion binding"/>
    <property type="evidence" value="ECO:0007669"/>
    <property type="project" value="UniProtKB-KW"/>
</dbReference>
<dbReference type="CDD" id="cd00687">
    <property type="entry name" value="Terpene_cyclase_nonplant_C1"/>
    <property type="match status" value="2"/>
</dbReference>
<dbReference type="Gene3D" id="1.10.600.10">
    <property type="entry name" value="Farnesyl Diphosphate Synthase"/>
    <property type="match status" value="2"/>
</dbReference>
<dbReference type="InterPro" id="IPR008949">
    <property type="entry name" value="Isoprenoid_synthase_dom_sf"/>
</dbReference>
<dbReference type="InterPro" id="IPR034686">
    <property type="entry name" value="Terpene_cyclase-like_2"/>
</dbReference>
<dbReference type="PANTHER" id="PTHR35201:SF4">
    <property type="entry name" value="BETA-PINACENE SYNTHASE-RELATED"/>
    <property type="match status" value="1"/>
</dbReference>
<dbReference type="PANTHER" id="PTHR35201">
    <property type="entry name" value="TERPENE SYNTHASE"/>
    <property type="match status" value="1"/>
</dbReference>
<dbReference type="Pfam" id="PF19086">
    <property type="entry name" value="Terpene_syn_C_2"/>
    <property type="match status" value="2"/>
</dbReference>
<dbReference type="SFLD" id="SFLDS00005">
    <property type="entry name" value="Isoprenoid_Synthase_Type_I"/>
    <property type="match status" value="2"/>
</dbReference>
<dbReference type="SFLD" id="SFLDG01020">
    <property type="entry name" value="Terpene_Cyclase_Like_2"/>
    <property type="match status" value="2"/>
</dbReference>
<dbReference type="SUPFAM" id="SSF48576">
    <property type="entry name" value="Terpenoid synthases"/>
    <property type="match status" value="2"/>
</dbReference>
<accession>Q9X839</accession>
<feature type="initiator methionine" description="Removed" evidence="2">
    <location>
        <position position="1"/>
    </location>
</feature>
<feature type="chain" id="PRO_0000247895" description="Germacradienol/geosmin synthase">
    <location>
        <begin position="2"/>
        <end position="726"/>
    </location>
</feature>
<feature type="region of interest" description="Germacradienol/germacrene D synthase">
    <location>
        <begin position="2"/>
        <end position="354"/>
    </location>
</feature>
<feature type="region of interest" description="Geosmin synthase">
    <location>
        <begin position="355"/>
        <end position="726"/>
    </location>
</feature>
<feature type="short sequence motif" description="DDXXD motif 1; degenerate">
    <location>
        <begin position="86"/>
        <end position="91"/>
    </location>
</feature>
<feature type="short sequence motif" description="DDXXD motif 2; degenerate">
    <location>
        <begin position="455"/>
        <end position="459"/>
    </location>
</feature>
<feature type="binding site" evidence="1">
    <location>
        <position position="86"/>
    </location>
    <ligand>
        <name>Mg(2+)</name>
        <dbReference type="ChEBI" id="CHEBI:18420"/>
    </ligand>
</feature>
<feature type="binding site" evidence="1">
    <location>
        <position position="91"/>
    </location>
    <ligand>
        <name>Mg(2+)</name>
        <dbReference type="ChEBI" id="CHEBI:18420"/>
    </ligand>
</feature>
<feature type="binding site" evidence="1">
    <location>
        <position position="267"/>
    </location>
    <ligand>
        <name>Mg(2+)</name>
        <dbReference type="ChEBI" id="CHEBI:18420"/>
    </ligand>
</feature>
<feature type="binding site" evidence="1">
    <location>
        <position position="271"/>
    </location>
    <ligand>
        <name>Mg(2+)</name>
        <dbReference type="ChEBI" id="CHEBI:18420"/>
    </ligand>
</feature>
<feature type="binding site" evidence="1">
    <location>
        <position position="276"/>
    </location>
    <ligand>
        <name>Mg(2+)</name>
        <dbReference type="ChEBI" id="CHEBI:18420"/>
    </ligand>
</feature>
<feature type="binding site" evidence="1">
    <location>
        <position position="455"/>
    </location>
    <ligand>
        <name>Mg(2+)</name>
        <dbReference type="ChEBI" id="CHEBI:18420"/>
    </ligand>
</feature>
<feature type="binding site" evidence="1">
    <location>
        <position position="598"/>
    </location>
    <ligand>
        <name>Mg(2+)</name>
        <dbReference type="ChEBI" id="CHEBI:18420"/>
    </ligand>
</feature>
<feature type="binding site" evidence="1">
    <location>
        <position position="602"/>
    </location>
    <ligand>
        <name>Mg(2+)</name>
        <dbReference type="ChEBI" id="CHEBI:18420"/>
    </ligand>
</feature>
<feature type="binding site" evidence="1">
    <location>
        <position position="606"/>
    </location>
    <ligand>
        <name>Mg(2+)</name>
        <dbReference type="ChEBI" id="CHEBI:18420"/>
    </ligand>
</feature>
<feature type="helix" evidence="8">
    <location>
        <begin position="23"/>
        <end position="37"/>
    </location>
</feature>
<feature type="strand" evidence="8">
    <location>
        <begin position="43"/>
        <end position="45"/>
    </location>
</feature>
<feature type="helix" evidence="8">
    <location>
        <begin position="48"/>
        <end position="54"/>
    </location>
</feature>
<feature type="helix" evidence="8">
    <location>
        <begin position="56"/>
        <end position="63"/>
    </location>
</feature>
<feature type="helix" evidence="8">
    <location>
        <begin position="69"/>
        <end position="92"/>
    </location>
</feature>
<feature type="turn" evidence="8">
    <location>
        <begin position="93"/>
        <end position="97"/>
    </location>
</feature>
<feature type="helix" evidence="8">
    <location>
        <begin position="99"/>
        <end position="108"/>
    </location>
</feature>
<feature type="helix" evidence="8">
    <location>
        <begin position="109"/>
        <end position="112"/>
    </location>
</feature>
<feature type="helix" evidence="8">
    <location>
        <begin position="127"/>
        <end position="139"/>
    </location>
</feature>
<feature type="helix" evidence="8">
    <location>
        <begin position="140"/>
        <end position="142"/>
    </location>
</feature>
<feature type="helix" evidence="8">
    <location>
        <begin position="145"/>
        <end position="171"/>
    </location>
</feature>
<feature type="helix" evidence="8">
    <location>
        <begin position="177"/>
        <end position="187"/>
    </location>
</feature>
<feature type="helix" evidence="8">
    <location>
        <begin position="190"/>
        <end position="200"/>
    </location>
</feature>
<feature type="helix" evidence="8">
    <location>
        <begin position="206"/>
        <end position="209"/>
    </location>
</feature>
<feature type="helix" evidence="8">
    <location>
        <begin position="212"/>
        <end position="239"/>
    </location>
</feature>
<feature type="helix" evidence="8">
    <location>
        <begin position="247"/>
        <end position="255"/>
    </location>
</feature>
<feature type="helix" evidence="8">
    <location>
        <begin position="259"/>
        <end position="282"/>
    </location>
</feature>
<feature type="helix" evidence="8">
    <location>
        <begin position="284"/>
        <end position="291"/>
    </location>
</feature>
<feature type="helix" evidence="8">
    <location>
        <begin position="296"/>
        <end position="320"/>
    </location>
</feature>
<feature type="helix" evidence="7">
    <location>
        <begin position="324"/>
        <end position="326"/>
    </location>
</feature>
<proteinExistence type="evidence at protein level"/>
<keyword id="KW-0002">3D-structure</keyword>
<keyword id="KW-0903">Direct protein sequencing</keyword>
<keyword id="KW-0456">Lyase</keyword>
<keyword id="KW-0460">Magnesium</keyword>
<keyword id="KW-0479">Metal-binding</keyword>
<keyword id="KW-1185">Reference proteome</keyword>
<keyword id="KW-0677">Repeat</keyword>
<sequence length="726" mass="81474">MTQQPFQLPHFYLPHPARLNPHLDEARAHSTTWAREMGMLEGSGVWEQSDLEAHDYGLLCAYTHPDCDGPALSLITDWYVWVFFFDDHFLEKYKRSQDRLAGKAHLDRLPLFMPLDDAAGMPEPRNPVEAGLADLWTRTVPAMSADWRRRFAVATEHLLNESMWELSNINEGRVANPVEYIEMRRKVGGAPWSAGLVEYATAEVPAAVAGTRPLRVLMETFSDAVHLRNDLFSYQREVEDEGELSNGVLVLETFFGCTTQEAADLVNDVLTSRLHQFEHTAFTEVPAVALEKGLTPLEVAAVGAYTKGLQDWQSGGHEWHMRSSRYMNKGERPLAGWQALTGPGTSAADVGALLADAVAQRARSYTYVPFQKVGPSVIPDIRMPYPLELSPALDGARRHLSEWCREMGILSEGVWDEDKLESCDLPLCAAGLDPDATQDQLDLASGWLAFGTYGDDYYPLVYGHRRDLAAARLTTTRLSDCMPLDGEPVPPPGNAMERSLIDLWVRTTAGMTPEERRPLKKAVDDMTEAWLWELSNQIQNRVPDPVDYLEMRRATFGSDLTLGLCRAGHGPAVPPEVYRSGPVRSLENAAIDYACLLNDVFSYQKEIEYEGEIHNAVLVVQNFFGVDYPAALGVVQDLMNQRMRQFEHVVAHELPVVYDDFQLSEEARTVMRGYVTDLQNWMAGILNWHRNVPRYKAEYLAGRTHGFLPDRIPAPPVPRSSPALTH</sequence>
<protein>
    <recommendedName>
        <fullName>Germacradienol/geosmin synthase</fullName>
    </recommendedName>
    <domain>
        <recommendedName>
            <fullName>Germacradienol/germacrene D synthase</fullName>
            <ecNumber>4.2.3.22</ecNumber>
            <ecNumber>4.2.3.75</ecNumber>
        </recommendedName>
        <alternativeName>
            <fullName>Sesquiterpene cyclase</fullName>
        </alternativeName>
        <alternativeName>
            <fullName>Sesquiterpene synthase</fullName>
        </alternativeName>
    </domain>
    <domain>
        <recommendedName>
            <fullName>Geosmin synthase</fullName>
            <ecNumber>4.1.99.16</ecNumber>
        </recommendedName>
    </domain>
</protein>
<evidence type="ECO:0000255" key="1"/>
<evidence type="ECO:0000269" key="2">
    <source>
    </source>
</evidence>
<evidence type="ECO:0000269" key="3">
    <source>
    </source>
</evidence>
<evidence type="ECO:0000269" key="4">
    <source>
    </source>
</evidence>
<evidence type="ECO:0000269" key="5">
    <source>
    </source>
</evidence>
<evidence type="ECO:0000305" key="6"/>
<evidence type="ECO:0007829" key="7">
    <source>
        <dbReference type="PDB" id="5DW7"/>
    </source>
</evidence>
<evidence type="ECO:0007829" key="8">
    <source>
        <dbReference type="PDB" id="5DZ2"/>
    </source>
</evidence>